<proteinExistence type="inferred from homology"/>
<evidence type="ECO:0000255" key="1">
    <source>
        <dbReference type="HAMAP-Rule" id="MF_00149"/>
    </source>
</evidence>
<accession>B0K9L6</accession>
<sequence length="614" mass="70264">MNKIHLLDEKTINKISAGEVVERPASIVKELIENSIDAGSKNITVEILEGGIPYIKVSDDGCGMNEIDAILAFERHATSKIKSDNDLYSIGTLGFRGEALASIAAVSHVTLQTKEEGALFGTKVVVEGGKVVEKTTCGCAKGCSIEVRDVFFNTPARRKFLKRPSTESMYITDVVTKLCLSHPEVSFKYVKDRKLQFITSGNGNIEDVILRLFGNEVYSSLMSASFESEDLKLKILAGKNSLNYSNRNMQFFYVNGRYVKNKTLSAAVDEAFKTYIPVNRYPAVFLYMEIDPRQIDVNIHPSKLEIKFSDERRIFEAVYKTIKDSLHKYNLIPEVKIEEKKNIFEIETPTISAEQTKLYFTSSDKEVEKEKKKFDNEFKGKNVFLKDNVLKENSKNSSLDNHLAVYEEYEHEKEEINKNDLAKKISDIRIVGTLFSTYIIVEKEDVFYIIDQHAAHERILYEKFTSQYEKIQTRQVTFPIVVELQPRDLELVHQEKELLNKLGYVFEEFGNNSIILREVPVILGQPEARQLFIDIVEKLKDKELVNKISLKEENIIMMACKAAVKAMDNLSEKEINKLFDDLKITENPYTCPHGRPVIIAITKTQLEKMFKRIM</sequence>
<feature type="chain" id="PRO_1000096695" description="DNA mismatch repair protein MutL">
    <location>
        <begin position="1"/>
        <end position="614"/>
    </location>
</feature>
<reference key="1">
    <citation type="submission" date="2008-01" db="EMBL/GenBank/DDBJ databases">
        <title>Complete sequence of Thermoanaerobacter pseudethanolicus 39E.</title>
        <authorList>
            <person name="Copeland A."/>
            <person name="Lucas S."/>
            <person name="Lapidus A."/>
            <person name="Barry K."/>
            <person name="Glavina del Rio T."/>
            <person name="Dalin E."/>
            <person name="Tice H."/>
            <person name="Pitluck S."/>
            <person name="Bruce D."/>
            <person name="Goodwin L."/>
            <person name="Saunders E."/>
            <person name="Brettin T."/>
            <person name="Detter J.C."/>
            <person name="Han C."/>
            <person name="Schmutz J."/>
            <person name="Larimer F."/>
            <person name="Land M."/>
            <person name="Hauser L."/>
            <person name="Kyrpides N."/>
            <person name="Lykidis A."/>
            <person name="Hemme C."/>
            <person name="Fields M.W."/>
            <person name="He Z."/>
            <person name="Zhou J."/>
            <person name="Richardson P."/>
        </authorList>
    </citation>
    <scope>NUCLEOTIDE SEQUENCE [LARGE SCALE GENOMIC DNA]</scope>
    <source>
        <strain>ATCC 33223 / DSM 2355 / 39E</strain>
    </source>
</reference>
<organism>
    <name type="scientific">Thermoanaerobacter pseudethanolicus (strain ATCC 33223 / 39E)</name>
    <name type="common">Clostridium thermohydrosulfuricum</name>
    <dbReference type="NCBI Taxonomy" id="340099"/>
    <lineage>
        <taxon>Bacteria</taxon>
        <taxon>Bacillati</taxon>
        <taxon>Bacillota</taxon>
        <taxon>Clostridia</taxon>
        <taxon>Thermoanaerobacterales</taxon>
        <taxon>Thermoanaerobacteraceae</taxon>
        <taxon>Thermoanaerobacter</taxon>
    </lineage>
</organism>
<keyword id="KW-0227">DNA damage</keyword>
<keyword id="KW-0234">DNA repair</keyword>
<keyword id="KW-1185">Reference proteome</keyword>
<comment type="function">
    <text evidence="1">This protein is involved in the repair of mismatches in DNA. It is required for dam-dependent methyl-directed DNA mismatch repair. May act as a 'molecular matchmaker', a protein that promotes the formation of a stable complex between two or more DNA-binding proteins in an ATP-dependent manner without itself being part of a final effector complex.</text>
</comment>
<comment type="similarity">
    <text evidence="1">Belongs to the DNA mismatch repair MutL/HexB family.</text>
</comment>
<gene>
    <name evidence="1" type="primary">mutL</name>
    <name type="ordered locus">Teth39_1175</name>
</gene>
<protein>
    <recommendedName>
        <fullName evidence="1">DNA mismatch repair protein MutL</fullName>
    </recommendedName>
</protein>
<dbReference type="EMBL" id="CP000924">
    <property type="protein sequence ID" value="ABY94829.1"/>
    <property type="molecule type" value="Genomic_DNA"/>
</dbReference>
<dbReference type="RefSeq" id="WP_012269346.1">
    <property type="nucleotide sequence ID" value="NC_010321.1"/>
</dbReference>
<dbReference type="SMR" id="B0K9L6"/>
<dbReference type="STRING" id="340099.Teth39_1175"/>
<dbReference type="KEGG" id="tpd:Teth39_1175"/>
<dbReference type="eggNOG" id="COG0323">
    <property type="taxonomic scope" value="Bacteria"/>
</dbReference>
<dbReference type="HOGENOM" id="CLU_004131_4_1_9"/>
<dbReference type="Proteomes" id="UP000002156">
    <property type="component" value="Chromosome"/>
</dbReference>
<dbReference type="GO" id="GO:0032300">
    <property type="term" value="C:mismatch repair complex"/>
    <property type="evidence" value="ECO:0007669"/>
    <property type="project" value="InterPro"/>
</dbReference>
<dbReference type="GO" id="GO:0005524">
    <property type="term" value="F:ATP binding"/>
    <property type="evidence" value="ECO:0007669"/>
    <property type="project" value="InterPro"/>
</dbReference>
<dbReference type="GO" id="GO:0016887">
    <property type="term" value="F:ATP hydrolysis activity"/>
    <property type="evidence" value="ECO:0007669"/>
    <property type="project" value="InterPro"/>
</dbReference>
<dbReference type="GO" id="GO:0140664">
    <property type="term" value="F:ATP-dependent DNA damage sensor activity"/>
    <property type="evidence" value="ECO:0007669"/>
    <property type="project" value="InterPro"/>
</dbReference>
<dbReference type="GO" id="GO:0030983">
    <property type="term" value="F:mismatched DNA binding"/>
    <property type="evidence" value="ECO:0007669"/>
    <property type="project" value="InterPro"/>
</dbReference>
<dbReference type="GO" id="GO:0006298">
    <property type="term" value="P:mismatch repair"/>
    <property type="evidence" value="ECO:0007669"/>
    <property type="project" value="UniProtKB-UniRule"/>
</dbReference>
<dbReference type="CDD" id="cd16926">
    <property type="entry name" value="HATPase_MutL-MLH-PMS-like"/>
    <property type="match status" value="1"/>
</dbReference>
<dbReference type="CDD" id="cd00782">
    <property type="entry name" value="MutL_Trans"/>
    <property type="match status" value="1"/>
</dbReference>
<dbReference type="FunFam" id="3.30.565.10:FF:000003">
    <property type="entry name" value="DNA mismatch repair endonuclease MutL"/>
    <property type="match status" value="1"/>
</dbReference>
<dbReference type="Gene3D" id="3.30.230.10">
    <property type="match status" value="1"/>
</dbReference>
<dbReference type="Gene3D" id="3.30.565.10">
    <property type="entry name" value="Histidine kinase-like ATPase, C-terminal domain"/>
    <property type="match status" value="1"/>
</dbReference>
<dbReference type="Gene3D" id="3.30.1540.20">
    <property type="entry name" value="MutL, C-terminal domain, dimerisation subdomain"/>
    <property type="match status" value="1"/>
</dbReference>
<dbReference type="Gene3D" id="3.30.1370.100">
    <property type="entry name" value="MutL, C-terminal domain, regulatory subdomain"/>
    <property type="match status" value="1"/>
</dbReference>
<dbReference type="HAMAP" id="MF_00149">
    <property type="entry name" value="DNA_mis_repair"/>
    <property type="match status" value="1"/>
</dbReference>
<dbReference type="InterPro" id="IPR014762">
    <property type="entry name" value="DNA_mismatch_repair_CS"/>
</dbReference>
<dbReference type="InterPro" id="IPR020667">
    <property type="entry name" value="DNA_mismatch_repair_MutL"/>
</dbReference>
<dbReference type="InterPro" id="IPR013507">
    <property type="entry name" value="DNA_mismatch_S5_2-like"/>
</dbReference>
<dbReference type="InterPro" id="IPR036890">
    <property type="entry name" value="HATPase_C_sf"/>
</dbReference>
<dbReference type="InterPro" id="IPR002099">
    <property type="entry name" value="MutL/Mlh/PMS"/>
</dbReference>
<dbReference type="InterPro" id="IPR038973">
    <property type="entry name" value="MutL/Mlh/Pms-like"/>
</dbReference>
<dbReference type="InterPro" id="IPR014790">
    <property type="entry name" value="MutL_C"/>
</dbReference>
<dbReference type="InterPro" id="IPR042120">
    <property type="entry name" value="MutL_C_dimsub"/>
</dbReference>
<dbReference type="InterPro" id="IPR042121">
    <property type="entry name" value="MutL_C_regsub"/>
</dbReference>
<dbReference type="InterPro" id="IPR037198">
    <property type="entry name" value="MutL_C_sf"/>
</dbReference>
<dbReference type="InterPro" id="IPR020568">
    <property type="entry name" value="Ribosomal_Su5_D2-typ_SF"/>
</dbReference>
<dbReference type="InterPro" id="IPR014721">
    <property type="entry name" value="Ribsml_uS5_D2-typ_fold_subgr"/>
</dbReference>
<dbReference type="NCBIfam" id="TIGR00585">
    <property type="entry name" value="mutl"/>
    <property type="match status" value="1"/>
</dbReference>
<dbReference type="PANTHER" id="PTHR10073">
    <property type="entry name" value="DNA MISMATCH REPAIR PROTEIN MLH, PMS, MUTL"/>
    <property type="match status" value="1"/>
</dbReference>
<dbReference type="PANTHER" id="PTHR10073:SF12">
    <property type="entry name" value="DNA MISMATCH REPAIR PROTEIN MLH1"/>
    <property type="match status" value="1"/>
</dbReference>
<dbReference type="Pfam" id="PF01119">
    <property type="entry name" value="DNA_mis_repair"/>
    <property type="match status" value="1"/>
</dbReference>
<dbReference type="Pfam" id="PF13589">
    <property type="entry name" value="HATPase_c_3"/>
    <property type="match status" value="1"/>
</dbReference>
<dbReference type="Pfam" id="PF08676">
    <property type="entry name" value="MutL_C"/>
    <property type="match status" value="1"/>
</dbReference>
<dbReference type="SMART" id="SM01340">
    <property type="entry name" value="DNA_mis_repair"/>
    <property type="match status" value="1"/>
</dbReference>
<dbReference type="SMART" id="SM00853">
    <property type="entry name" value="MutL_C"/>
    <property type="match status" value="1"/>
</dbReference>
<dbReference type="SUPFAM" id="SSF55874">
    <property type="entry name" value="ATPase domain of HSP90 chaperone/DNA topoisomerase II/histidine kinase"/>
    <property type="match status" value="1"/>
</dbReference>
<dbReference type="SUPFAM" id="SSF118116">
    <property type="entry name" value="DNA mismatch repair protein MutL"/>
    <property type="match status" value="1"/>
</dbReference>
<dbReference type="SUPFAM" id="SSF54211">
    <property type="entry name" value="Ribosomal protein S5 domain 2-like"/>
    <property type="match status" value="1"/>
</dbReference>
<dbReference type="PROSITE" id="PS00058">
    <property type="entry name" value="DNA_MISMATCH_REPAIR_1"/>
    <property type="match status" value="1"/>
</dbReference>
<name>MUTL_THEP3</name>